<gene>
    <name evidence="1" type="primary">rpiA</name>
    <name type="ordered locus">APL_1453</name>
</gene>
<comment type="function">
    <text evidence="1">Catalyzes the reversible conversion of ribose-5-phosphate to ribulose 5-phosphate.</text>
</comment>
<comment type="catalytic activity">
    <reaction evidence="1">
        <text>aldehydo-D-ribose 5-phosphate = D-ribulose 5-phosphate</text>
        <dbReference type="Rhea" id="RHEA:14657"/>
        <dbReference type="ChEBI" id="CHEBI:58121"/>
        <dbReference type="ChEBI" id="CHEBI:58273"/>
        <dbReference type="EC" id="5.3.1.6"/>
    </reaction>
</comment>
<comment type="pathway">
    <text evidence="1">Carbohydrate degradation; pentose phosphate pathway; D-ribose 5-phosphate from D-ribulose 5-phosphate (non-oxidative stage): step 1/1.</text>
</comment>
<comment type="subunit">
    <text evidence="1">Homodimer.</text>
</comment>
<comment type="similarity">
    <text evidence="1">Belongs to the ribose 5-phosphate isomerase family.</text>
</comment>
<dbReference type="EC" id="5.3.1.6" evidence="1"/>
<dbReference type="EMBL" id="CP000569">
    <property type="protein sequence ID" value="ABN74537.1"/>
    <property type="molecule type" value="Genomic_DNA"/>
</dbReference>
<dbReference type="RefSeq" id="WP_005598674.1">
    <property type="nucleotide sequence ID" value="NC_009053.1"/>
</dbReference>
<dbReference type="SMR" id="A3N2A1"/>
<dbReference type="STRING" id="416269.APL_1453"/>
<dbReference type="EnsemblBacteria" id="ABN74537">
    <property type="protein sequence ID" value="ABN74537"/>
    <property type="gene ID" value="APL_1453"/>
</dbReference>
<dbReference type="GeneID" id="48599698"/>
<dbReference type="KEGG" id="apl:APL_1453"/>
<dbReference type="eggNOG" id="COG0120">
    <property type="taxonomic scope" value="Bacteria"/>
</dbReference>
<dbReference type="HOGENOM" id="CLU_056590_1_1_6"/>
<dbReference type="UniPathway" id="UPA00115">
    <property type="reaction ID" value="UER00412"/>
</dbReference>
<dbReference type="Proteomes" id="UP000001432">
    <property type="component" value="Chromosome"/>
</dbReference>
<dbReference type="GO" id="GO:0005829">
    <property type="term" value="C:cytosol"/>
    <property type="evidence" value="ECO:0007669"/>
    <property type="project" value="TreeGrafter"/>
</dbReference>
<dbReference type="GO" id="GO:0004751">
    <property type="term" value="F:ribose-5-phosphate isomerase activity"/>
    <property type="evidence" value="ECO:0007669"/>
    <property type="project" value="UniProtKB-UniRule"/>
</dbReference>
<dbReference type="GO" id="GO:0006014">
    <property type="term" value="P:D-ribose metabolic process"/>
    <property type="evidence" value="ECO:0007669"/>
    <property type="project" value="TreeGrafter"/>
</dbReference>
<dbReference type="GO" id="GO:0009052">
    <property type="term" value="P:pentose-phosphate shunt, non-oxidative branch"/>
    <property type="evidence" value="ECO:0007669"/>
    <property type="project" value="UniProtKB-UniRule"/>
</dbReference>
<dbReference type="CDD" id="cd01398">
    <property type="entry name" value="RPI_A"/>
    <property type="match status" value="1"/>
</dbReference>
<dbReference type="FunFam" id="3.30.70.260:FF:000004">
    <property type="entry name" value="Ribose-5-phosphate isomerase A"/>
    <property type="match status" value="1"/>
</dbReference>
<dbReference type="FunFam" id="3.40.50.1360:FF:000001">
    <property type="entry name" value="Ribose-5-phosphate isomerase A"/>
    <property type="match status" value="1"/>
</dbReference>
<dbReference type="Gene3D" id="3.30.70.260">
    <property type="match status" value="1"/>
</dbReference>
<dbReference type="Gene3D" id="3.40.50.1360">
    <property type="match status" value="1"/>
</dbReference>
<dbReference type="HAMAP" id="MF_00170">
    <property type="entry name" value="Rib_5P_isom_A"/>
    <property type="match status" value="1"/>
</dbReference>
<dbReference type="InterPro" id="IPR037171">
    <property type="entry name" value="NagB/RpiA_transferase-like"/>
</dbReference>
<dbReference type="InterPro" id="IPR020672">
    <property type="entry name" value="Ribose5P_isomerase_typA_subgr"/>
</dbReference>
<dbReference type="InterPro" id="IPR004788">
    <property type="entry name" value="Ribose5P_isomerase_type_A"/>
</dbReference>
<dbReference type="NCBIfam" id="NF001924">
    <property type="entry name" value="PRK00702.1"/>
    <property type="match status" value="1"/>
</dbReference>
<dbReference type="NCBIfam" id="TIGR00021">
    <property type="entry name" value="rpiA"/>
    <property type="match status" value="1"/>
</dbReference>
<dbReference type="PANTHER" id="PTHR11934">
    <property type="entry name" value="RIBOSE-5-PHOSPHATE ISOMERASE"/>
    <property type="match status" value="1"/>
</dbReference>
<dbReference type="PANTHER" id="PTHR11934:SF0">
    <property type="entry name" value="RIBOSE-5-PHOSPHATE ISOMERASE"/>
    <property type="match status" value="1"/>
</dbReference>
<dbReference type="Pfam" id="PF06026">
    <property type="entry name" value="Rib_5-P_isom_A"/>
    <property type="match status" value="1"/>
</dbReference>
<dbReference type="SUPFAM" id="SSF75445">
    <property type="entry name" value="D-ribose-5-phosphate isomerase (RpiA), lid domain"/>
    <property type="match status" value="1"/>
</dbReference>
<dbReference type="SUPFAM" id="SSF100950">
    <property type="entry name" value="NagB/RpiA/CoA transferase-like"/>
    <property type="match status" value="1"/>
</dbReference>
<name>RPIA_ACTP2</name>
<sequence>MTQQEMKKIAAQAALQFVKPDTIVGVGSGSTVNCFIDALASMKDQIKGAVAASKASEERLRAIGIEVFNANEVSELDVYIDGADEITPQGAMIKGGGAALTREKIVSSLAKKFVCIVDGSKQVDVLGTTFPLPVEVIPMARSYVARQLVALGGSPEYREGVVTDNGNVILDVHNFHIIEPLKMEHTINNIAGVVTNGIFAQRYANVTIVGTPEGAKIIE</sequence>
<feature type="chain" id="PRO_1000016895" description="Ribose-5-phosphate isomerase A">
    <location>
        <begin position="1"/>
        <end position="219"/>
    </location>
</feature>
<feature type="active site" description="Proton acceptor" evidence="1">
    <location>
        <position position="103"/>
    </location>
</feature>
<feature type="binding site" evidence="1">
    <location>
        <begin position="28"/>
        <end position="31"/>
    </location>
    <ligand>
        <name>substrate</name>
    </ligand>
</feature>
<feature type="binding site" evidence="1">
    <location>
        <begin position="81"/>
        <end position="84"/>
    </location>
    <ligand>
        <name>substrate</name>
    </ligand>
</feature>
<feature type="binding site" evidence="1">
    <location>
        <begin position="94"/>
        <end position="97"/>
    </location>
    <ligand>
        <name>substrate</name>
    </ligand>
</feature>
<feature type="binding site" evidence="1">
    <location>
        <position position="121"/>
    </location>
    <ligand>
        <name>substrate</name>
    </ligand>
</feature>
<accession>A3N2A1</accession>
<keyword id="KW-0413">Isomerase</keyword>
<keyword id="KW-1185">Reference proteome</keyword>
<reference key="1">
    <citation type="journal article" date="2008" name="J. Bacteriol.">
        <title>The complete genome sequence of Actinobacillus pleuropneumoniae L20 (serotype 5b).</title>
        <authorList>
            <person name="Foote S.J."/>
            <person name="Bosse J.T."/>
            <person name="Bouevitch A.B."/>
            <person name="Langford P.R."/>
            <person name="Young N.M."/>
            <person name="Nash J.H.E."/>
        </authorList>
    </citation>
    <scope>NUCLEOTIDE SEQUENCE [LARGE SCALE GENOMIC DNA]</scope>
    <source>
        <strain>L20</strain>
    </source>
</reference>
<proteinExistence type="inferred from homology"/>
<evidence type="ECO:0000255" key="1">
    <source>
        <dbReference type="HAMAP-Rule" id="MF_00170"/>
    </source>
</evidence>
<organism>
    <name type="scientific">Actinobacillus pleuropneumoniae serotype 5b (strain L20)</name>
    <dbReference type="NCBI Taxonomy" id="416269"/>
    <lineage>
        <taxon>Bacteria</taxon>
        <taxon>Pseudomonadati</taxon>
        <taxon>Pseudomonadota</taxon>
        <taxon>Gammaproteobacteria</taxon>
        <taxon>Pasteurellales</taxon>
        <taxon>Pasteurellaceae</taxon>
        <taxon>Actinobacillus</taxon>
    </lineage>
</organism>
<protein>
    <recommendedName>
        <fullName evidence="1">Ribose-5-phosphate isomerase A</fullName>
        <ecNumber evidence="1">5.3.1.6</ecNumber>
    </recommendedName>
    <alternativeName>
        <fullName evidence="1">Phosphoriboisomerase A</fullName>
        <shortName evidence="1">PRI</shortName>
    </alternativeName>
</protein>